<gene>
    <name evidence="1" type="primary">SEY1</name>
    <name type="ORF">PADG_01945</name>
</gene>
<accession>C1G4S9</accession>
<sequence length="872" mass="98380">MVANGHFAGVGDVLDAKNYEHGVQVIDEEKEFNPNLSNYLSYENVTPAGFNYHLISVFGSQSTGKSTLLNSLFGTHFSVMSETERRQTTKGIWLSKNKRLKSDKGQDNQTKMADNILVMDVEGTDGRERGEDQDFERKSALFALATSEVLIVNIWEHQVGLYQGANMGLLKTVFEVNLELFLKDKRSNPRSLLFFVIRDFLGTTPLQNLQNTLLQDLNRIWNSLSKPAGLENSSITDYFDFAFAGLPHKNFQPEKFVDEVRKLSTRFCDGHRDPNKTDAKGTGSIEGGIFLPEYHRRIPADGFAVYAEGIWDQIVNNKDLDLPTQQELLAQFRCDEISREVLVAFDEAISPFEAKQAEAVQAGNPQVLGGLGSAMCNARMKSVKNFDTEASRYHKRVYQMKKSELQDKIDSRLKALFLGQLSAAHRSGIQEFTESVTAAVKAGQKRGASYDFAEIVTKERKLAIEKFEKEARAAVVEDTQWSNYQQELSLYQKDLENIGGQLRRDEMRRLATRVGRWVRSRLGESIDLEFNAIGSGRGGSGAPEFGDKPSEKSLWDRVWTLFVDTVLDAERRFTERASSFDASIDEVDVGLWRLRRKSWGVLRAKIDEEMMEGNILLKLRENFEDKFRYDDAGVPRIWRPNDDIESIYTRARESTLTLIPLLSRFRLAETNAPPPLDKWIGHTPSSATPADEEDLTPIGGVDEDEGKSLEEEMTMIGEAKKQDLTVRFKKTADGVYVEAKRSAIGGITQVPLYFYGLLLALGWNEIVAVLRNPAYFLLLFVCAVTAYVTYQLNLWGPIIKMTEAASQQALMEGKTRLREFLEASDTGLQAMAMSKGRNAEEYDMSNMKNRKSAGGFQNNRSHIDDADDDDDF</sequence>
<protein>
    <recommendedName>
        <fullName evidence="1">Protein SEY1</fullName>
        <ecNumber evidence="1">3.6.5.-</ecNumber>
    </recommendedName>
</protein>
<dbReference type="EC" id="3.6.5.-" evidence="1"/>
<dbReference type="EMBL" id="KN275958">
    <property type="protein sequence ID" value="EEH45795.1"/>
    <property type="molecule type" value="Genomic_DNA"/>
</dbReference>
<dbReference type="RefSeq" id="XP_010757649.1">
    <property type="nucleotide sequence ID" value="XM_010759347.1"/>
</dbReference>
<dbReference type="SMR" id="C1G4S9"/>
<dbReference type="FunCoup" id="C1G4S9">
    <property type="interactions" value="55"/>
</dbReference>
<dbReference type="STRING" id="502780.C1G4S9"/>
<dbReference type="GeneID" id="22581518"/>
<dbReference type="KEGG" id="pbn:PADG_01945"/>
<dbReference type="VEuPathDB" id="FungiDB:PADG_01945"/>
<dbReference type="eggNOG" id="KOG2203">
    <property type="taxonomic scope" value="Eukaryota"/>
</dbReference>
<dbReference type="HOGENOM" id="CLU_011270_0_0_1"/>
<dbReference type="InParanoid" id="C1G4S9"/>
<dbReference type="OMA" id="PIIKMTE"/>
<dbReference type="OrthoDB" id="1460at33183"/>
<dbReference type="Proteomes" id="UP000001628">
    <property type="component" value="Unassembled WGS sequence"/>
</dbReference>
<dbReference type="GO" id="GO:0005789">
    <property type="term" value="C:endoplasmic reticulum membrane"/>
    <property type="evidence" value="ECO:0007669"/>
    <property type="project" value="UniProtKB-SubCell"/>
</dbReference>
<dbReference type="GO" id="GO:0005525">
    <property type="term" value="F:GTP binding"/>
    <property type="evidence" value="ECO:0007669"/>
    <property type="project" value="UniProtKB-UniRule"/>
</dbReference>
<dbReference type="GO" id="GO:0003924">
    <property type="term" value="F:GTPase activity"/>
    <property type="evidence" value="ECO:0007669"/>
    <property type="project" value="UniProtKB-UniRule"/>
</dbReference>
<dbReference type="GO" id="GO:0016320">
    <property type="term" value="P:endoplasmic reticulum membrane fusion"/>
    <property type="evidence" value="ECO:0007669"/>
    <property type="project" value="TreeGrafter"/>
</dbReference>
<dbReference type="CDD" id="cd01851">
    <property type="entry name" value="GBP"/>
    <property type="match status" value="1"/>
</dbReference>
<dbReference type="FunFam" id="3.40.50.300:FF:000727">
    <property type="entry name" value="Protein SEY1 homolog"/>
    <property type="match status" value="1"/>
</dbReference>
<dbReference type="Gene3D" id="3.40.50.300">
    <property type="entry name" value="P-loop containing nucleotide triphosphate hydrolases"/>
    <property type="match status" value="1"/>
</dbReference>
<dbReference type="HAMAP" id="MF_03109">
    <property type="entry name" value="Sey1"/>
    <property type="match status" value="1"/>
</dbReference>
<dbReference type="InterPro" id="IPR030386">
    <property type="entry name" value="G_GB1_RHD3_dom"/>
</dbReference>
<dbReference type="InterPro" id="IPR027417">
    <property type="entry name" value="P-loop_NTPase"/>
</dbReference>
<dbReference type="InterPro" id="IPR008803">
    <property type="entry name" value="RHD3/Sey1"/>
</dbReference>
<dbReference type="InterPro" id="IPR046758">
    <property type="entry name" value="Sey1/RHD3-like_3HB"/>
</dbReference>
<dbReference type="PANTHER" id="PTHR45923">
    <property type="entry name" value="PROTEIN SEY1"/>
    <property type="match status" value="1"/>
</dbReference>
<dbReference type="PANTHER" id="PTHR45923:SF2">
    <property type="entry name" value="PROTEIN SEY1"/>
    <property type="match status" value="1"/>
</dbReference>
<dbReference type="Pfam" id="PF05879">
    <property type="entry name" value="RHD3_GTPase"/>
    <property type="match status" value="1"/>
</dbReference>
<dbReference type="Pfam" id="PF20428">
    <property type="entry name" value="Sey1_3HB"/>
    <property type="match status" value="1"/>
</dbReference>
<dbReference type="SUPFAM" id="SSF52540">
    <property type="entry name" value="P-loop containing nucleoside triphosphate hydrolases"/>
    <property type="match status" value="1"/>
</dbReference>
<dbReference type="PROSITE" id="PS51715">
    <property type="entry name" value="G_GB1_RHD3"/>
    <property type="match status" value="1"/>
</dbReference>
<evidence type="ECO:0000255" key="1">
    <source>
        <dbReference type="HAMAP-Rule" id="MF_03109"/>
    </source>
</evidence>
<evidence type="ECO:0000255" key="2">
    <source>
        <dbReference type="PROSITE-ProRule" id="PRU01052"/>
    </source>
</evidence>
<evidence type="ECO:0000256" key="3">
    <source>
        <dbReference type="SAM" id="MobiDB-lite"/>
    </source>
</evidence>
<proteinExistence type="inferred from homology"/>
<comment type="function">
    <text evidence="1">Cooperates with the reticulon proteins and tubule-shaping DP1 family proteins to generate and maintain the structure of the tubular endoplasmic reticulum network. Has GTPase activity, which is required for its function in ER organization.</text>
</comment>
<comment type="subcellular location">
    <subcellularLocation>
        <location evidence="1">Endoplasmic reticulum membrane</location>
        <topology evidence="1">Multi-pass membrane protein</topology>
    </subcellularLocation>
    <text evidence="1">Enriched in the cortical ER. Concentrated in punctae along the ER tubules.</text>
</comment>
<comment type="similarity">
    <text evidence="2">Belongs to the TRAFAC class dynamin-like GTPase superfamily. GB1/RHD3 GTPase family. RHD3 subfamily.</text>
</comment>
<reference key="1">
    <citation type="journal article" date="2011" name="PLoS Genet.">
        <title>Comparative genomic analysis of human fungal pathogens causing paracoccidioidomycosis.</title>
        <authorList>
            <person name="Desjardins C.A."/>
            <person name="Champion M.D."/>
            <person name="Holder J.W."/>
            <person name="Muszewska A."/>
            <person name="Goldberg J."/>
            <person name="Bailao A.M."/>
            <person name="Brigido M.M."/>
            <person name="Ferreira M.E."/>
            <person name="Garcia A.M."/>
            <person name="Grynberg M."/>
            <person name="Gujja S."/>
            <person name="Heiman D.I."/>
            <person name="Henn M.R."/>
            <person name="Kodira C.D."/>
            <person name="Leon-Narvaez H."/>
            <person name="Longo L.V.G."/>
            <person name="Ma L.-J."/>
            <person name="Malavazi I."/>
            <person name="Matsuo A.L."/>
            <person name="Morais F.V."/>
            <person name="Pereira M."/>
            <person name="Rodriguez-Brito S."/>
            <person name="Sakthikumar S."/>
            <person name="Salem-Izacc S.M."/>
            <person name="Sykes S.M."/>
            <person name="Teixeira M.M."/>
            <person name="Vallejo M.C."/>
            <person name="Walter M.E."/>
            <person name="Yandava C."/>
            <person name="Young S."/>
            <person name="Zeng Q."/>
            <person name="Zucker J."/>
            <person name="Felipe M.S."/>
            <person name="Goldman G.H."/>
            <person name="Haas B.J."/>
            <person name="McEwen J.G."/>
            <person name="Nino-Vega G."/>
            <person name="Puccia R."/>
            <person name="San-Blas G."/>
            <person name="Soares C.M."/>
            <person name="Birren B.W."/>
            <person name="Cuomo C.A."/>
        </authorList>
    </citation>
    <scope>NUCLEOTIDE SEQUENCE [LARGE SCALE GENOMIC DNA]</scope>
    <source>
        <strain>Pb18</strain>
    </source>
</reference>
<keyword id="KW-0175">Coiled coil</keyword>
<keyword id="KW-0256">Endoplasmic reticulum</keyword>
<keyword id="KW-0342">GTP-binding</keyword>
<keyword id="KW-0378">Hydrolase</keyword>
<keyword id="KW-0472">Membrane</keyword>
<keyword id="KW-0547">Nucleotide-binding</keyword>
<keyword id="KW-1185">Reference proteome</keyword>
<keyword id="KW-0812">Transmembrane</keyword>
<keyword id="KW-1133">Transmembrane helix</keyword>
<organism>
    <name type="scientific">Paracoccidioides brasiliensis (strain Pb18)</name>
    <dbReference type="NCBI Taxonomy" id="502780"/>
    <lineage>
        <taxon>Eukaryota</taxon>
        <taxon>Fungi</taxon>
        <taxon>Dikarya</taxon>
        <taxon>Ascomycota</taxon>
        <taxon>Pezizomycotina</taxon>
        <taxon>Eurotiomycetes</taxon>
        <taxon>Eurotiomycetidae</taxon>
        <taxon>Onygenales</taxon>
        <taxon>Ajellomycetaceae</taxon>
        <taxon>Paracoccidioides</taxon>
    </lineage>
</organism>
<feature type="chain" id="PRO_0000384991" description="Protein SEY1">
    <location>
        <begin position="1"/>
        <end position="872"/>
    </location>
</feature>
<feature type="topological domain" description="Cytoplasmic" evidence="1">
    <location>
        <begin position="1"/>
        <end position="749"/>
    </location>
</feature>
<feature type="transmembrane region" description="Helical" evidence="1">
    <location>
        <begin position="750"/>
        <end position="770"/>
    </location>
</feature>
<feature type="topological domain" description="Lumenal" evidence="1">
    <location>
        <begin position="771"/>
        <end position="773"/>
    </location>
</feature>
<feature type="transmembrane region" description="Helical" evidence="1">
    <location>
        <begin position="774"/>
        <end position="794"/>
    </location>
</feature>
<feature type="topological domain" description="Cytoplasmic" evidence="1">
    <location>
        <begin position="795"/>
        <end position="872"/>
    </location>
</feature>
<feature type="domain" description="GB1/RHD3-type G" evidence="2">
    <location>
        <begin position="49"/>
        <end position="307"/>
    </location>
</feature>
<feature type="region of interest" description="Disordered" evidence="3">
    <location>
        <begin position="676"/>
        <end position="704"/>
    </location>
</feature>
<feature type="region of interest" description="Disordered" evidence="3">
    <location>
        <begin position="849"/>
        <end position="872"/>
    </location>
</feature>
<feature type="coiled-coil region" evidence="1">
    <location>
        <begin position="482"/>
        <end position="504"/>
    </location>
</feature>
<feature type="compositionally biased region" description="Acidic residues" evidence="3">
    <location>
        <begin position="690"/>
        <end position="704"/>
    </location>
</feature>
<feature type="binding site" evidence="1">
    <location>
        <begin position="59"/>
        <end position="66"/>
    </location>
    <ligand>
        <name>GTP</name>
        <dbReference type="ChEBI" id="CHEBI:37565"/>
    </ligand>
</feature>
<name>SEY1_PARBD</name>